<name>ARGB_PSEPK</name>
<dbReference type="EC" id="2.7.2.8" evidence="1"/>
<dbReference type="EMBL" id="AE015451">
    <property type="protein sequence ID" value="AAN70854.1"/>
    <property type="molecule type" value="Genomic_DNA"/>
</dbReference>
<dbReference type="RefSeq" id="NP_747390.1">
    <property type="nucleotide sequence ID" value="NC_002947.4"/>
</dbReference>
<dbReference type="RefSeq" id="WP_004575216.1">
    <property type="nucleotide sequence ID" value="NZ_CP169744.1"/>
</dbReference>
<dbReference type="SMR" id="P59300"/>
<dbReference type="STRING" id="160488.PP_5289"/>
<dbReference type="PaxDb" id="160488-PP_5289"/>
<dbReference type="GeneID" id="83683097"/>
<dbReference type="KEGG" id="ppu:PP_5289"/>
<dbReference type="PATRIC" id="fig|160488.4.peg.5641"/>
<dbReference type="eggNOG" id="COG0548">
    <property type="taxonomic scope" value="Bacteria"/>
</dbReference>
<dbReference type="HOGENOM" id="CLU_053680_0_0_6"/>
<dbReference type="OrthoDB" id="9803155at2"/>
<dbReference type="PhylomeDB" id="P59300"/>
<dbReference type="BioCyc" id="PPUT160488:G1G01-5646-MONOMER"/>
<dbReference type="UniPathway" id="UPA00068">
    <property type="reaction ID" value="UER00107"/>
</dbReference>
<dbReference type="Proteomes" id="UP000000556">
    <property type="component" value="Chromosome"/>
</dbReference>
<dbReference type="GO" id="GO:0005737">
    <property type="term" value="C:cytoplasm"/>
    <property type="evidence" value="ECO:0007669"/>
    <property type="project" value="UniProtKB-SubCell"/>
</dbReference>
<dbReference type="GO" id="GO:0003991">
    <property type="term" value="F:acetylglutamate kinase activity"/>
    <property type="evidence" value="ECO:0007669"/>
    <property type="project" value="UniProtKB-UniRule"/>
</dbReference>
<dbReference type="GO" id="GO:0005524">
    <property type="term" value="F:ATP binding"/>
    <property type="evidence" value="ECO:0007669"/>
    <property type="project" value="UniProtKB-UniRule"/>
</dbReference>
<dbReference type="GO" id="GO:0042450">
    <property type="term" value="P:arginine biosynthetic process via ornithine"/>
    <property type="evidence" value="ECO:0007669"/>
    <property type="project" value="UniProtKB-UniRule"/>
</dbReference>
<dbReference type="GO" id="GO:0006526">
    <property type="term" value="P:L-arginine biosynthetic process"/>
    <property type="evidence" value="ECO:0007669"/>
    <property type="project" value="UniProtKB-UniPathway"/>
</dbReference>
<dbReference type="CDD" id="cd04250">
    <property type="entry name" value="AAK_NAGK-C"/>
    <property type="match status" value="1"/>
</dbReference>
<dbReference type="FunFam" id="3.40.1160.10:FF:000004">
    <property type="entry name" value="Acetylglutamate kinase"/>
    <property type="match status" value="1"/>
</dbReference>
<dbReference type="Gene3D" id="3.40.1160.10">
    <property type="entry name" value="Acetylglutamate kinase-like"/>
    <property type="match status" value="1"/>
</dbReference>
<dbReference type="HAMAP" id="MF_00082">
    <property type="entry name" value="ArgB"/>
    <property type="match status" value="1"/>
</dbReference>
<dbReference type="InterPro" id="IPR036393">
    <property type="entry name" value="AceGlu_kinase-like_sf"/>
</dbReference>
<dbReference type="InterPro" id="IPR004662">
    <property type="entry name" value="AcgluKinase_fam"/>
</dbReference>
<dbReference type="InterPro" id="IPR037528">
    <property type="entry name" value="ArgB"/>
</dbReference>
<dbReference type="InterPro" id="IPR001048">
    <property type="entry name" value="Asp/Glu/Uridylate_kinase"/>
</dbReference>
<dbReference type="InterPro" id="IPR001057">
    <property type="entry name" value="Glu/AcGlu_kinase"/>
</dbReference>
<dbReference type="InterPro" id="IPR041727">
    <property type="entry name" value="NAGK-C"/>
</dbReference>
<dbReference type="NCBIfam" id="TIGR00761">
    <property type="entry name" value="argB"/>
    <property type="match status" value="1"/>
</dbReference>
<dbReference type="PANTHER" id="PTHR23342">
    <property type="entry name" value="N-ACETYLGLUTAMATE SYNTHASE"/>
    <property type="match status" value="1"/>
</dbReference>
<dbReference type="PANTHER" id="PTHR23342:SF0">
    <property type="entry name" value="N-ACETYLGLUTAMATE SYNTHASE, MITOCHONDRIAL"/>
    <property type="match status" value="1"/>
</dbReference>
<dbReference type="Pfam" id="PF00696">
    <property type="entry name" value="AA_kinase"/>
    <property type="match status" value="1"/>
</dbReference>
<dbReference type="PIRSF" id="PIRSF000728">
    <property type="entry name" value="NAGK"/>
    <property type="match status" value="1"/>
</dbReference>
<dbReference type="PRINTS" id="PR00474">
    <property type="entry name" value="GLU5KINASE"/>
</dbReference>
<dbReference type="SUPFAM" id="SSF53633">
    <property type="entry name" value="Carbamate kinase-like"/>
    <property type="match status" value="1"/>
</dbReference>
<accession>P59300</accession>
<feature type="chain" id="PRO_0000112651" description="Acetylglutamate kinase">
    <location>
        <begin position="1"/>
        <end position="301"/>
    </location>
</feature>
<feature type="binding site" evidence="1">
    <location>
        <begin position="68"/>
        <end position="69"/>
    </location>
    <ligand>
        <name>substrate</name>
    </ligand>
</feature>
<feature type="binding site" evidence="1">
    <location>
        <position position="90"/>
    </location>
    <ligand>
        <name>substrate</name>
    </ligand>
</feature>
<feature type="binding site" evidence="1">
    <location>
        <position position="195"/>
    </location>
    <ligand>
        <name>substrate</name>
    </ligand>
</feature>
<feature type="site" description="Transition state stabilizer" evidence="1">
    <location>
        <position position="33"/>
    </location>
</feature>
<feature type="site" description="Transition state stabilizer" evidence="1">
    <location>
        <position position="255"/>
    </location>
</feature>
<gene>
    <name evidence="1" type="primary">argB</name>
    <name type="ordered locus">PP_5289</name>
</gene>
<protein>
    <recommendedName>
        <fullName evidence="1">Acetylglutamate kinase</fullName>
        <ecNumber evidence="1">2.7.2.8</ecNumber>
    </recommendedName>
    <alternativeName>
        <fullName evidence="1">N-acetyl-L-glutamate 5-phosphotransferase</fullName>
    </alternativeName>
    <alternativeName>
        <fullName evidence="1">NAG kinase</fullName>
        <shortName evidence="1">NAGK</shortName>
    </alternativeName>
</protein>
<sequence>MTLDRDAASHVAEVLSEALPYIRRFVGKTLVIKYGGNAMESEELKTGFARDIVLMKAVGINPVVVHGGGPQIGDLLKRLSIESHFIDGMRVTDSATMDVVEMVLGGQVNKDIVNLINRHGGSAIGLTGKDAELIRARKLTVSRQTPEMTTPEIIDIGHVGEVVSVNTDLLNMLVKGDFIPVIAPIGVGANGESYNINADLVAGKVAEALKAEKLMLLTNIAGLMDKQGQVLTGLTTEQVNELIADGTIYGGMLPKIKCALDAVQGGVNSSHIIDGRVPNAVLLEIFTDSGVGTLITNRKPR</sequence>
<organism>
    <name type="scientific">Pseudomonas putida (strain ATCC 47054 / DSM 6125 / CFBP 8728 / NCIMB 11950 / KT2440)</name>
    <dbReference type="NCBI Taxonomy" id="160488"/>
    <lineage>
        <taxon>Bacteria</taxon>
        <taxon>Pseudomonadati</taxon>
        <taxon>Pseudomonadota</taxon>
        <taxon>Gammaproteobacteria</taxon>
        <taxon>Pseudomonadales</taxon>
        <taxon>Pseudomonadaceae</taxon>
        <taxon>Pseudomonas</taxon>
    </lineage>
</organism>
<reference key="1">
    <citation type="journal article" date="2002" name="Environ. Microbiol.">
        <title>Complete genome sequence and comparative analysis of the metabolically versatile Pseudomonas putida KT2440.</title>
        <authorList>
            <person name="Nelson K.E."/>
            <person name="Weinel C."/>
            <person name="Paulsen I.T."/>
            <person name="Dodson R.J."/>
            <person name="Hilbert H."/>
            <person name="Martins dos Santos V.A.P."/>
            <person name="Fouts D.E."/>
            <person name="Gill S.R."/>
            <person name="Pop M."/>
            <person name="Holmes M."/>
            <person name="Brinkac L.M."/>
            <person name="Beanan M.J."/>
            <person name="DeBoy R.T."/>
            <person name="Daugherty S.C."/>
            <person name="Kolonay J.F."/>
            <person name="Madupu R."/>
            <person name="Nelson W.C."/>
            <person name="White O."/>
            <person name="Peterson J.D."/>
            <person name="Khouri H.M."/>
            <person name="Hance I."/>
            <person name="Chris Lee P."/>
            <person name="Holtzapple E.K."/>
            <person name="Scanlan D."/>
            <person name="Tran K."/>
            <person name="Moazzez A."/>
            <person name="Utterback T.R."/>
            <person name="Rizzo M."/>
            <person name="Lee K."/>
            <person name="Kosack D."/>
            <person name="Moestl D."/>
            <person name="Wedler H."/>
            <person name="Lauber J."/>
            <person name="Stjepandic D."/>
            <person name="Hoheisel J."/>
            <person name="Straetz M."/>
            <person name="Heim S."/>
            <person name="Kiewitz C."/>
            <person name="Eisen J.A."/>
            <person name="Timmis K.N."/>
            <person name="Duesterhoeft A."/>
            <person name="Tuemmler B."/>
            <person name="Fraser C.M."/>
        </authorList>
    </citation>
    <scope>NUCLEOTIDE SEQUENCE [LARGE SCALE GENOMIC DNA]</scope>
    <source>
        <strain>ATCC 47054 / DSM 6125 / CFBP 8728 / NCIMB 11950 / KT2440</strain>
    </source>
</reference>
<proteinExistence type="inferred from homology"/>
<evidence type="ECO:0000255" key="1">
    <source>
        <dbReference type="HAMAP-Rule" id="MF_00082"/>
    </source>
</evidence>
<comment type="function">
    <text evidence="1">Catalyzes the ATP-dependent phosphorylation of N-acetyl-L-glutamate.</text>
</comment>
<comment type="catalytic activity">
    <reaction evidence="1">
        <text>N-acetyl-L-glutamate + ATP = N-acetyl-L-glutamyl 5-phosphate + ADP</text>
        <dbReference type="Rhea" id="RHEA:14629"/>
        <dbReference type="ChEBI" id="CHEBI:30616"/>
        <dbReference type="ChEBI" id="CHEBI:44337"/>
        <dbReference type="ChEBI" id="CHEBI:57936"/>
        <dbReference type="ChEBI" id="CHEBI:456216"/>
        <dbReference type="EC" id="2.7.2.8"/>
    </reaction>
</comment>
<comment type="pathway">
    <text evidence="1">Amino-acid biosynthesis; L-arginine biosynthesis; N(2)-acetyl-L-ornithine from L-glutamate: step 2/4.</text>
</comment>
<comment type="subcellular location">
    <subcellularLocation>
        <location evidence="1">Cytoplasm</location>
    </subcellularLocation>
</comment>
<comment type="similarity">
    <text evidence="1">Belongs to the acetylglutamate kinase family. ArgB subfamily.</text>
</comment>
<keyword id="KW-0028">Amino-acid biosynthesis</keyword>
<keyword id="KW-0055">Arginine biosynthesis</keyword>
<keyword id="KW-0067">ATP-binding</keyword>
<keyword id="KW-0963">Cytoplasm</keyword>
<keyword id="KW-0418">Kinase</keyword>
<keyword id="KW-0547">Nucleotide-binding</keyword>
<keyword id="KW-1185">Reference proteome</keyword>
<keyword id="KW-0808">Transferase</keyword>